<organism>
    <name type="scientific">Buchnera aphidicola subsp. Acyrthosiphon pisum (strain APS)</name>
    <name type="common">Acyrthosiphon pisum symbiotic bacterium</name>
    <dbReference type="NCBI Taxonomy" id="107806"/>
    <lineage>
        <taxon>Bacteria</taxon>
        <taxon>Pseudomonadati</taxon>
        <taxon>Pseudomonadota</taxon>
        <taxon>Gammaproteobacteria</taxon>
        <taxon>Enterobacterales</taxon>
        <taxon>Erwiniaceae</taxon>
        <taxon>Buchnera</taxon>
    </lineage>
</organism>
<name>GUAC_BUCAI</name>
<evidence type="ECO:0000250" key="1"/>
<evidence type="ECO:0000305" key="2"/>
<reference key="1">
    <citation type="journal article" date="2000" name="Nature">
        <title>Genome sequence of the endocellular bacterial symbiont of aphids Buchnera sp. APS.</title>
        <authorList>
            <person name="Shigenobu S."/>
            <person name="Watanabe H."/>
            <person name="Hattori M."/>
            <person name="Sakaki Y."/>
            <person name="Ishikawa H."/>
        </authorList>
    </citation>
    <scope>NUCLEOTIDE SEQUENCE [LARGE SCALE GENOMIC DNA]</scope>
    <source>
        <strain>APS</strain>
    </source>
</reference>
<comment type="function">
    <text evidence="1">Catalyzes the irreversible NADPH-dependent deamination of GMP to IMP. It functions in the conversion of nucleobase, nucleoside and nucleotide derivatives of G to A nucleotides, and in maintaining the intracellular balance of A and G nucleotides (By similarity).</text>
</comment>
<comment type="catalytic activity">
    <reaction>
        <text>IMP + NH4(+) + NADP(+) = GMP + NADPH + 2 H(+)</text>
        <dbReference type="Rhea" id="RHEA:17185"/>
        <dbReference type="ChEBI" id="CHEBI:15378"/>
        <dbReference type="ChEBI" id="CHEBI:28938"/>
        <dbReference type="ChEBI" id="CHEBI:57783"/>
        <dbReference type="ChEBI" id="CHEBI:58053"/>
        <dbReference type="ChEBI" id="CHEBI:58115"/>
        <dbReference type="ChEBI" id="CHEBI:58349"/>
        <dbReference type="EC" id="1.7.1.7"/>
    </reaction>
</comment>
<comment type="subunit">
    <text evidence="1">Homotetramer.</text>
</comment>
<comment type="similarity">
    <text evidence="2">Belongs to the IMPDH/GMPR family. GuaC type 1 subfamily.</text>
</comment>
<proteinExistence type="inferred from homology"/>
<feature type="chain" id="PRO_0000093732" description="GMP reductase">
    <location>
        <begin position="1"/>
        <end position="349"/>
    </location>
</feature>
<feature type="active site" description="Thioimidate intermediate" evidence="1">
    <location>
        <position position="186"/>
    </location>
</feature>
<feature type="binding site" evidence="1">
    <location>
        <begin position="108"/>
        <end position="131"/>
    </location>
    <ligand>
        <name>NADP(+)</name>
        <dbReference type="ChEBI" id="CHEBI:58349"/>
    </ligand>
</feature>
<feature type="binding site" evidence="1">
    <location>
        <position position="181"/>
    </location>
    <ligand>
        <name>K(+)</name>
        <dbReference type="ChEBI" id="CHEBI:29103"/>
    </ligand>
</feature>
<feature type="binding site" evidence="1">
    <location>
        <position position="183"/>
    </location>
    <ligand>
        <name>K(+)</name>
        <dbReference type="ChEBI" id="CHEBI:29103"/>
    </ligand>
</feature>
<feature type="binding site" evidence="1">
    <location>
        <begin position="216"/>
        <end position="239"/>
    </location>
    <ligand>
        <name>NADP(+)</name>
        <dbReference type="ChEBI" id="CHEBI:58349"/>
    </ligand>
</feature>
<gene>
    <name type="primary">guaC</name>
    <name type="ordered locus">BU204</name>
</gene>
<dbReference type="EC" id="1.7.1.7"/>
<dbReference type="EMBL" id="BA000003">
    <property type="protein sequence ID" value="BAB12921.1"/>
    <property type="molecule type" value="Genomic_DNA"/>
</dbReference>
<dbReference type="RefSeq" id="NP_240035.1">
    <property type="nucleotide sequence ID" value="NC_002528.1"/>
</dbReference>
<dbReference type="RefSeq" id="WP_009874161.1">
    <property type="nucleotide sequence ID" value="NC_002528.1"/>
</dbReference>
<dbReference type="SMR" id="P57300"/>
<dbReference type="STRING" id="563178.BUAP5A_201"/>
<dbReference type="EnsemblBacteria" id="BAB12921">
    <property type="protein sequence ID" value="BAB12921"/>
    <property type="gene ID" value="BAB12921"/>
</dbReference>
<dbReference type="KEGG" id="buc:BU204"/>
<dbReference type="PATRIC" id="fig|107806.10.peg.215"/>
<dbReference type="eggNOG" id="COG0516">
    <property type="taxonomic scope" value="Bacteria"/>
</dbReference>
<dbReference type="HOGENOM" id="CLU_022552_5_3_6"/>
<dbReference type="Proteomes" id="UP000001806">
    <property type="component" value="Chromosome"/>
</dbReference>
<dbReference type="GO" id="GO:0005829">
    <property type="term" value="C:cytosol"/>
    <property type="evidence" value="ECO:0007669"/>
    <property type="project" value="TreeGrafter"/>
</dbReference>
<dbReference type="GO" id="GO:1902560">
    <property type="term" value="C:GMP reductase complex"/>
    <property type="evidence" value="ECO:0007669"/>
    <property type="project" value="InterPro"/>
</dbReference>
<dbReference type="GO" id="GO:0003920">
    <property type="term" value="F:GMP reductase activity"/>
    <property type="evidence" value="ECO:0007669"/>
    <property type="project" value="UniProtKB-UniRule"/>
</dbReference>
<dbReference type="GO" id="GO:0046872">
    <property type="term" value="F:metal ion binding"/>
    <property type="evidence" value="ECO:0007669"/>
    <property type="project" value="UniProtKB-KW"/>
</dbReference>
<dbReference type="GO" id="GO:0006163">
    <property type="term" value="P:purine nucleotide metabolic process"/>
    <property type="evidence" value="ECO:0007669"/>
    <property type="project" value="UniProtKB-UniRule"/>
</dbReference>
<dbReference type="CDD" id="cd00381">
    <property type="entry name" value="IMPDH"/>
    <property type="match status" value="1"/>
</dbReference>
<dbReference type="FunFam" id="3.20.20.70:FF:000012">
    <property type="entry name" value="GMP reductase"/>
    <property type="match status" value="1"/>
</dbReference>
<dbReference type="Gene3D" id="3.20.20.70">
    <property type="entry name" value="Aldolase class I"/>
    <property type="match status" value="1"/>
</dbReference>
<dbReference type="HAMAP" id="MF_00596">
    <property type="entry name" value="GMP_reduct_type1"/>
    <property type="match status" value="1"/>
</dbReference>
<dbReference type="InterPro" id="IPR013785">
    <property type="entry name" value="Aldolase_TIM"/>
</dbReference>
<dbReference type="InterPro" id="IPR050139">
    <property type="entry name" value="GMP_reductase"/>
</dbReference>
<dbReference type="InterPro" id="IPR005993">
    <property type="entry name" value="GMPR"/>
</dbReference>
<dbReference type="InterPro" id="IPR015875">
    <property type="entry name" value="IMP_DH/GMP_Rdtase_CS"/>
</dbReference>
<dbReference type="InterPro" id="IPR001093">
    <property type="entry name" value="IMP_DH_GMPRt"/>
</dbReference>
<dbReference type="NCBIfam" id="TIGR01305">
    <property type="entry name" value="GMP_reduct_1"/>
    <property type="match status" value="1"/>
</dbReference>
<dbReference type="NCBIfam" id="NF003470">
    <property type="entry name" value="PRK05096.1"/>
    <property type="match status" value="1"/>
</dbReference>
<dbReference type="PANTHER" id="PTHR43170">
    <property type="entry name" value="GMP REDUCTASE"/>
    <property type="match status" value="1"/>
</dbReference>
<dbReference type="PANTHER" id="PTHR43170:SF5">
    <property type="entry name" value="GMP REDUCTASE"/>
    <property type="match status" value="1"/>
</dbReference>
<dbReference type="Pfam" id="PF00478">
    <property type="entry name" value="IMPDH"/>
    <property type="match status" value="1"/>
</dbReference>
<dbReference type="PIRSF" id="PIRSF000235">
    <property type="entry name" value="GMP_reductase"/>
    <property type="match status" value="1"/>
</dbReference>
<dbReference type="SMART" id="SM01240">
    <property type="entry name" value="IMPDH"/>
    <property type="match status" value="1"/>
</dbReference>
<dbReference type="SUPFAM" id="SSF51412">
    <property type="entry name" value="Inosine monophosphate dehydrogenase (IMPDH)"/>
    <property type="match status" value="1"/>
</dbReference>
<dbReference type="PROSITE" id="PS00487">
    <property type="entry name" value="IMP_DH_GMP_RED"/>
    <property type="match status" value="1"/>
</dbReference>
<sequence>MRIEEDIKLGFKDVLIRPKRSILKSRSQVNLARCFSFKYSASIWSGIPIIAANMDTIGTFEMVKSLSKFNILTAVHKYYSFEEWKNFVCLSSKEILNHVIVSIGTSNIDFLKIKKIFLLSSELKYICIDVANGYSEHIVSFLKLVRDYFPDKIICAGNVVTGEMVEELILSGADIVKVGIGPGSVCTTRVKTGVGYPQLSAIIECADAAHGLNGQIISDGGCTVSGDIAKAFGGGADFVMLGGMLSGHKECSGDIIEEKSKKYMIFYGMSSVSAMQRYEGKIAGYRASEGKTVKIPFRGGVDSTIRDILGGLRSSCTYVGAEKLKELTKRTTFIRVTEQENCIFNAFKE</sequence>
<accession>P57300</accession>
<protein>
    <recommendedName>
        <fullName>GMP reductase</fullName>
        <ecNumber>1.7.1.7</ecNumber>
    </recommendedName>
    <alternativeName>
        <fullName>Guanosine 5'-monophosphate oxidoreductase</fullName>
        <shortName>Guanosine monophosphate reductase</shortName>
    </alternativeName>
</protein>
<keyword id="KW-0479">Metal-binding</keyword>
<keyword id="KW-0521">NADP</keyword>
<keyword id="KW-0560">Oxidoreductase</keyword>
<keyword id="KW-0630">Potassium</keyword>
<keyword id="KW-1185">Reference proteome</keyword>